<reference key="1">
    <citation type="journal article" date="2008" name="PLoS ONE">
        <title>Comparative analysis of Acinetobacters: three genomes for three lifestyles.</title>
        <authorList>
            <person name="Vallenet D."/>
            <person name="Nordmann P."/>
            <person name="Barbe V."/>
            <person name="Poirel L."/>
            <person name="Mangenot S."/>
            <person name="Bataille E."/>
            <person name="Dossat C."/>
            <person name="Gas S."/>
            <person name="Kreimeyer A."/>
            <person name="Lenoble P."/>
            <person name="Oztas S."/>
            <person name="Poulain J."/>
            <person name="Segurens B."/>
            <person name="Robert C."/>
            <person name="Abergel C."/>
            <person name="Claverie J.-M."/>
            <person name="Raoult D."/>
            <person name="Medigue C."/>
            <person name="Weissenbach J."/>
            <person name="Cruveiller S."/>
        </authorList>
    </citation>
    <scope>NUCLEOTIDE SEQUENCE [LARGE SCALE GENOMIC DNA]</scope>
    <source>
        <strain>SDF</strain>
    </source>
</reference>
<accession>B0VR37</accession>
<sequence length="181" mass="19446">MPLIIGIDPGSRLTGYGIIEKDGSKLRFVDAGTIRTETQEMPERLKRIFAGVERIVKFHGPTEAAVEQVFMAQNPDSALKLGQARGAAIAALVNLDLQVAEYTARQIKQSVVGYGAADKEQVQMMVMRLLNLTIKPQADAADALAAAICHAHASGSMSKLTVLNALGGMARGRSRSSSRRR</sequence>
<protein>
    <recommendedName>
        <fullName evidence="1">Crossover junction endodeoxyribonuclease RuvC</fullName>
        <ecNumber evidence="1">3.1.21.10</ecNumber>
    </recommendedName>
    <alternativeName>
        <fullName evidence="1">Holliday junction nuclease RuvC</fullName>
    </alternativeName>
    <alternativeName>
        <fullName evidence="1">Holliday junction resolvase RuvC</fullName>
    </alternativeName>
</protein>
<proteinExistence type="inferred from homology"/>
<gene>
    <name evidence="1" type="primary">ruvC</name>
    <name type="ordered locus">ABSDF2129</name>
</gene>
<feature type="chain" id="PRO_1000090495" description="Crossover junction endodeoxyribonuclease RuvC">
    <location>
        <begin position="1"/>
        <end position="181"/>
    </location>
</feature>
<feature type="active site" evidence="1">
    <location>
        <position position="8"/>
    </location>
</feature>
<feature type="active site" evidence="1">
    <location>
        <position position="67"/>
    </location>
</feature>
<feature type="active site" evidence="1">
    <location>
        <position position="139"/>
    </location>
</feature>
<feature type="binding site" evidence="1">
    <location>
        <position position="8"/>
    </location>
    <ligand>
        <name>Mg(2+)</name>
        <dbReference type="ChEBI" id="CHEBI:18420"/>
        <label>1</label>
    </ligand>
</feature>
<feature type="binding site" evidence="1">
    <location>
        <position position="67"/>
    </location>
    <ligand>
        <name>Mg(2+)</name>
        <dbReference type="ChEBI" id="CHEBI:18420"/>
        <label>2</label>
    </ligand>
</feature>
<feature type="binding site" evidence="1">
    <location>
        <position position="139"/>
    </location>
    <ligand>
        <name>Mg(2+)</name>
        <dbReference type="ChEBI" id="CHEBI:18420"/>
        <label>1</label>
    </ligand>
</feature>
<name>RUVC_ACIBS</name>
<organism>
    <name type="scientific">Acinetobacter baumannii (strain SDF)</name>
    <dbReference type="NCBI Taxonomy" id="509170"/>
    <lineage>
        <taxon>Bacteria</taxon>
        <taxon>Pseudomonadati</taxon>
        <taxon>Pseudomonadota</taxon>
        <taxon>Gammaproteobacteria</taxon>
        <taxon>Moraxellales</taxon>
        <taxon>Moraxellaceae</taxon>
        <taxon>Acinetobacter</taxon>
        <taxon>Acinetobacter calcoaceticus/baumannii complex</taxon>
    </lineage>
</organism>
<keyword id="KW-0963">Cytoplasm</keyword>
<keyword id="KW-0227">DNA damage</keyword>
<keyword id="KW-0233">DNA recombination</keyword>
<keyword id="KW-0234">DNA repair</keyword>
<keyword id="KW-0238">DNA-binding</keyword>
<keyword id="KW-0255">Endonuclease</keyword>
<keyword id="KW-0378">Hydrolase</keyword>
<keyword id="KW-0460">Magnesium</keyword>
<keyword id="KW-0479">Metal-binding</keyword>
<keyword id="KW-0540">Nuclease</keyword>
<evidence type="ECO:0000255" key="1">
    <source>
        <dbReference type="HAMAP-Rule" id="MF_00034"/>
    </source>
</evidence>
<dbReference type="EC" id="3.1.21.10" evidence="1"/>
<dbReference type="EMBL" id="CU468230">
    <property type="protein sequence ID" value="CAP01456.1"/>
    <property type="molecule type" value="Genomic_DNA"/>
</dbReference>
<dbReference type="SMR" id="B0VR37"/>
<dbReference type="KEGG" id="abm:ABSDF2129"/>
<dbReference type="HOGENOM" id="CLU_091257_2_1_6"/>
<dbReference type="Proteomes" id="UP000001741">
    <property type="component" value="Chromosome"/>
</dbReference>
<dbReference type="GO" id="GO:0005737">
    <property type="term" value="C:cytoplasm"/>
    <property type="evidence" value="ECO:0007669"/>
    <property type="project" value="UniProtKB-SubCell"/>
</dbReference>
<dbReference type="GO" id="GO:0048476">
    <property type="term" value="C:Holliday junction resolvase complex"/>
    <property type="evidence" value="ECO:0007669"/>
    <property type="project" value="UniProtKB-UniRule"/>
</dbReference>
<dbReference type="GO" id="GO:0008821">
    <property type="term" value="F:crossover junction DNA endonuclease activity"/>
    <property type="evidence" value="ECO:0007669"/>
    <property type="project" value="UniProtKB-UniRule"/>
</dbReference>
<dbReference type="GO" id="GO:0003677">
    <property type="term" value="F:DNA binding"/>
    <property type="evidence" value="ECO:0007669"/>
    <property type="project" value="UniProtKB-KW"/>
</dbReference>
<dbReference type="GO" id="GO:0000287">
    <property type="term" value="F:magnesium ion binding"/>
    <property type="evidence" value="ECO:0007669"/>
    <property type="project" value="UniProtKB-UniRule"/>
</dbReference>
<dbReference type="GO" id="GO:0006310">
    <property type="term" value="P:DNA recombination"/>
    <property type="evidence" value="ECO:0007669"/>
    <property type="project" value="UniProtKB-UniRule"/>
</dbReference>
<dbReference type="GO" id="GO:0006281">
    <property type="term" value="P:DNA repair"/>
    <property type="evidence" value="ECO:0007669"/>
    <property type="project" value="UniProtKB-UniRule"/>
</dbReference>
<dbReference type="CDD" id="cd16962">
    <property type="entry name" value="RuvC"/>
    <property type="match status" value="1"/>
</dbReference>
<dbReference type="FunFam" id="3.30.420.10:FF:000002">
    <property type="entry name" value="Crossover junction endodeoxyribonuclease RuvC"/>
    <property type="match status" value="1"/>
</dbReference>
<dbReference type="Gene3D" id="3.30.420.10">
    <property type="entry name" value="Ribonuclease H-like superfamily/Ribonuclease H"/>
    <property type="match status" value="1"/>
</dbReference>
<dbReference type="HAMAP" id="MF_00034">
    <property type="entry name" value="RuvC"/>
    <property type="match status" value="1"/>
</dbReference>
<dbReference type="InterPro" id="IPR012337">
    <property type="entry name" value="RNaseH-like_sf"/>
</dbReference>
<dbReference type="InterPro" id="IPR036397">
    <property type="entry name" value="RNaseH_sf"/>
</dbReference>
<dbReference type="InterPro" id="IPR020563">
    <property type="entry name" value="X-over_junc_endoDNase_Mg_BS"/>
</dbReference>
<dbReference type="InterPro" id="IPR002176">
    <property type="entry name" value="X-over_junc_endoDNase_RuvC"/>
</dbReference>
<dbReference type="NCBIfam" id="TIGR00228">
    <property type="entry name" value="ruvC"/>
    <property type="match status" value="1"/>
</dbReference>
<dbReference type="PANTHER" id="PTHR30194">
    <property type="entry name" value="CROSSOVER JUNCTION ENDODEOXYRIBONUCLEASE RUVC"/>
    <property type="match status" value="1"/>
</dbReference>
<dbReference type="PANTHER" id="PTHR30194:SF3">
    <property type="entry name" value="CROSSOVER JUNCTION ENDODEOXYRIBONUCLEASE RUVC"/>
    <property type="match status" value="1"/>
</dbReference>
<dbReference type="Pfam" id="PF02075">
    <property type="entry name" value="RuvC"/>
    <property type="match status" value="1"/>
</dbReference>
<dbReference type="PRINTS" id="PR00696">
    <property type="entry name" value="RSOLVASERUVC"/>
</dbReference>
<dbReference type="SUPFAM" id="SSF53098">
    <property type="entry name" value="Ribonuclease H-like"/>
    <property type="match status" value="1"/>
</dbReference>
<dbReference type="PROSITE" id="PS01321">
    <property type="entry name" value="RUVC"/>
    <property type="match status" value="1"/>
</dbReference>
<comment type="function">
    <text evidence="1">The RuvA-RuvB-RuvC complex processes Holliday junction (HJ) DNA during genetic recombination and DNA repair. Endonuclease that resolves HJ intermediates. Cleaves cruciform DNA by making single-stranded nicks across the HJ at symmetrical positions within the homologous arms, yielding a 5'-phosphate and a 3'-hydroxyl group; requires a central core of homology in the junction. The consensus cleavage sequence is 5'-(A/T)TT(C/G)-3'. Cleavage occurs on the 3'-side of the TT dinucleotide at the point of strand exchange. HJ branch migration catalyzed by RuvA-RuvB allows RuvC to scan DNA until it finds its consensus sequence, where it cleaves and resolves the cruciform DNA.</text>
</comment>
<comment type="catalytic activity">
    <reaction evidence="1">
        <text>Endonucleolytic cleavage at a junction such as a reciprocal single-stranded crossover between two homologous DNA duplexes (Holliday junction).</text>
        <dbReference type="EC" id="3.1.21.10"/>
    </reaction>
</comment>
<comment type="cofactor">
    <cofactor evidence="1">
        <name>Mg(2+)</name>
        <dbReference type="ChEBI" id="CHEBI:18420"/>
    </cofactor>
    <text evidence="1">Binds 2 Mg(2+) ion per subunit.</text>
</comment>
<comment type="subunit">
    <text evidence="1">Homodimer which binds Holliday junction (HJ) DNA. The HJ becomes 2-fold symmetrical on binding to RuvC with unstacked arms; it has a different conformation from HJ DNA in complex with RuvA. In the full resolvosome a probable DNA-RuvA(4)-RuvB(12)-RuvC(2) complex forms which resolves the HJ.</text>
</comment>
<comment type="subcellular location">
    <subcellularLocation>
        <location evidence="1">Cytoplasm</location>
    </subcellularLocation>
</comment>
<comment type="similarity">
    <text evidence="1">Belongs to the RuvC family.</text>
</comment>